<accession>Q54LF0</accession>
<gene>
    <name type="primary">sir2B</name>
    <name type="ORF">DDB_G0286671</name>
</gene>
<comment type="function">
    <text evidence="1">NAD-dependent deacetylase, which plays an important role in the regulation of transcriptional repression.</text>
</comment>
<comment type="catalytic activity">
    <reaction evidence="2">
        <text>N(6)-acetyl-L-lysyl-[protein] + NAD(+) + H2O = 2''-O-acetyl-ADP-D-ribose + nicotinamide + L-lysyl-[protein]</text>
        <dbReference type="Rhea" id="RHEA:43636"/>
        <dbReference type="Rhea" id="RHEA-COMP:9752"/>
        <dbReference type="Rhea" id="RHEA-COMP:10731"/>
        <dbReference type="ChEBI" id="CHEBI:15377"/>
        <dbReference type="ChEBI" id="CHEBI:17154"/>
        <dbReference type="ChEBI" id="CHEBI:29969"/>
        <dbReference type="ChEBI" id="CHEBI:57540"/>
        <dbReference type="ChEBI" id="CHEBI:61930"/>
        <dbReference type="ChEBI" id="CHEBI:83767"/>
        <dbReference type="EC" id="2.3.1.286"/>
    </reaction>
</comment>
<comment type="cofactor">
    <cofactor evidence="1">
        <name>Zn(2+)</name>
        <dbReference type="ChEBI" id="CHEBI:29105"/>
    </cofactor>
    <text evidence="1">Binds 1 zinc ion per subunit.</text>
</comment>
<comment type="developmental stage">
    <text evidence="4">Expressed at low levels in growing cells, but at high levels in the prestalk-cell region during the developmental phase.</text>
</comment>
<comment type="similarity">
    <text evidence="5">Belongs to the sirtuin family.</text>
</comment>
<organism>
    <name type="scientific">Dictyostelium discoideum</name>
    <name type="common">Social amoeba</name>
    <dbReference type="NCBI Taxonomy" id="44689"/>
    <lineage>
        <taxon>Eukaryota</taxon>
        <taxon>Amoebozoa</taxon>
        <taxon>Evosea</taxon>
        <taxon>Eumycetozoa</taxon>
        <taxon>Dictyostelia</taxon>
        <taxon>Dictyosteliales</taxon>
        <taxon>Dictyosteliaceae</taxon>
        <taxon>Dictyostelium</taxon>
    </lineage>
</organism>
<evidence type="ECO:0000250" key="1"/>
<evidence type="ECO:0000255" key="2">
    <source>
        <dbReference type="PROSITE-ProRule" id="PRU00236"/>
    </source>
</evidence>
<evidence type="ECO:0000256" key="3">
    <source>
        <dbReference type="SAM" id="MobiDB-lite"/>
    </source>
</evidence>
<evidence type="ECO:0000269" key="4">
    <source ref="2"/>
</evidence>
<evidence type="ECO:0000305" key="5"/>
<reference key="1">
    <citation type="journal article" date="2005" name="Nature">
        <title>The genome of the social amoeba Dictyostelium discoideum.</title>
        <authorList>
            <person name="Eichinger L."/>
            <person name="Pachebat J.A."/>
            <person name="Gloeckner G."/>
            <person name="Rajandream M.A."/>
            <person name="Sucgang R."/>
            <person name="Berriman M."/>
            <person name="Song J."/>
            <person name="Olsen R."/>
            <person name="Szafranski K."/>
            <person name="Xu Q."/>
            <person name="Tunggal B."/>
            <person name="Kummerfeld S."/>
            <person name="Madera M."/>
            <person name="Konfortov B.A."/>
            <person name="Rivero F."/>
            <person name="Bankier A.T."/>
            <person name="Lehmann R."/>
            <person name="Hamlin N."/>
            <person name="Davies R."/>
            <person name="Gaudet P."/>
            <person name="Fey P."/>
            <person name="Pilcher K."/>
            <person name="Chen G."/>
            <person name="Saunders D."/>
            <person name="Sodergren E.J."/>
            <person name="Davis P."/>
            <person name="Kerhornou A."/>
            <person name="Nie X."/>
            <person name="Hall N."/>
            <person name="Anjard C."/>
            <person name="Hemphill L."/>
            <person name="Bason N."/>
            <person name="Farbrother P."/>
            <person name="Desany B."/>
            <person name="Just E."/>
            <person name="Morio T."/>
            <person name="Rost R."/>
            <person name="Churcher C.M."/>
            <person name="Cooper J."/>
            <person name="Haydock S."/>
            <person name="van Driessche N."/>
            <person name="Cronin A."/>
            <person name="Goodhead I."/>
            <person name="Muzny D.M."/>
            <person name="Mourier T."/>
            <person name="Pain A."/>
            <person name="Lu M."/>
            <person name="Harper D."/>
            <person name="Lindsay R."/>
            <person name="Hauser H."/>
            <person name="James K.D."/>
            <person name="Quiles M."/>
            <person name="Madan Babu M."/>
            <person name="Saito T."/>
            <person name="Buchrieser C."/>
            <person name="Wardroper A."/>
            <person name="Felder M."/>
            <person name="Thangavelu M."/>
            <person name="Johnson D."/>
            <person name="Knights A."/>
            <person name="Loulseged H."/>
            <person name="Mungall K.L."/>
            <person name="Oliver K."/>
            <person name="Price C."/>
            <person name="Quail M.A."/>
            <person name="Urushihara H."/>
            <person name="Hernandez J."/>
            <person name="Rabbinowitsch E."/>
            <person name="Steffen D."/>
            <person name="Sanders M."/>
            <person name="Ma J."/>
            <person name="Kohara Y."/>
            <person name="Sharp S."/>
            <person name="Simmonds M.N."/>
            <person name="Spiegler S."/>
            <person name="Tivey A."/>
            <person name="Sugano S."/>
            <person name="White B."/>
            <person name="Walker D."/>
            <person name="Woodward J.R."/>
            <person name="Winckler T."/>
            <person name="Tanaka Y."/>
            <person name="Shaulsky G."/>
            <person name="Schleicher M."/>
            <person name="Weinstock G.M."/>
            <person name="Rosenthal A."/>
            <person name="Cox E.C."/>
            <person name="Chisholm R.L."/>
            <person name="Gibbs R.A."/>
            <person name="Loomis W.F."/>
            <person name="Platzer M."/>
            <person name="Kay R.R."/>
            <person name="Williams J.G."/>
            <person name="Dear P.H."/>
            <person name="Noegel A.A."/>
            <person name="Barrell B.G."/>
            <person name="Kuspa A."/>
        </authorList>
    </citation>
    <scope>NUCLEOTIDE SEQUENCE [LARGE SCALE GENOMIC DNA]</scope>
    <source>
        <strain>AX4</strain>
    </source>
</reference>
<reference key="2">
    <citation type="journal article" date="2008" name="Microbes Environ.">
        <title>Developmental and spatial expression of sir2 genes in the cellular slime mold Dictyostelium discoideum.</title>
        <authorList>
            <person name="Katayama T."/>
            <person name="Yasukawa H."/>
        </authorList>
    </citation>
    <scope>DEVELOPMENTAL STAGE</scope>
</reference>
<keyword id="KW-0040">ANK repeat</keyword>
<keyword id="KW-0479">Metal-binding</keyword>
<keyword id="KW-0520">NAD</keyword>
<keyword id="KW-1185">Reference proteome</keyword>
<keyword id="KW-0677">Repeat</keyword>
<keyword id="KW-0808">Transferase</keyword>
<keyword id="KW-0862">Zinc</keyword>
<dbReference type="EC" id="2.3.1.286" evidence="2"/>
<dbReference type="EMBL" id="AAFI02000089">
    <property type="protein sequence ID" value="EAL64091.1"/>
    <property type="molecule type" value="Genomic_DNA"/>
</dbReference>
<dbReference type="RefSeq" id="XP_637611.1">
    <property type="nucleotide sequence ID" value="XM_632519.1"/>
</dbReference>
<dbReference type="SMR" id="Q54LF0"/>
<dbReference type="STRING" id="44689.Q54LF0"/>
<dbReference type="PaxDb" id="44689-DDB0216432"/>
<dbReference type="EnsemblProtists" id="EAL64091">
    <property type="protein sequence ID" value="EAL64091"/>
    <property type="gene ID" value="DDB_G0286671"/>
</dbReference>
<dbReference type="GeneID" id="8625751"/>
<dbReference type="KEGG" id="ddi:DDB_G0286671"/>
<dbReference type="dictyBase" id="DDB_G0286671">
    <property type="gene designation" value="sir2B"/>
</dbReference>
<dbReference type="VEuPathDB" id="AmoebaDB:DDB_G0286671"/>
<dbReference type="eggNOG" id="KOG2682">
    <property type="taxonomic scope" value="Eukaryota"/>
</dbReference>
<dbReference type="eggNOG" id="KOG4177">
    <property type="taxonomic scope" value="Eukaryota"/>
</dbReference>
<dbReference type="HOGENOM" id="CLU_359989_0_0_1"/>
<dbReference type="InParanoid" id="Q54LF0"/>
<dbReference type="OMA" id="DFRECDC"/>
<dbReference type="PRO" id="PR:Q54LF0"/>
<dbReference type="Proteomes" id="UP000002195">
    <property type="component" value="Chromosome 4"/>
</dbReference>
<dbReference type="GO" id="GO:0046872">
    <property type="term" value="F:metal ion binding"/>
    <property type="evidence" value="ECO:0007669"/>
    <property type="project" value="UniProtKB-KW"/>
</dbReference>
<dbReference type="GO" id="GO:0070403">
    <property type="term" value="F:NAD+ binding"/>
    <property type="evidence" value="ECO:0007669"/>
    <property type="project" value="InterPro"/>
</dbReference>
<dbReference type="GO" id="GO:0034979">
    <property type="term" value="F:NAD-dependent protein lysine deacetylase activity"/>
    <property type="evidence" value="ECO:0007669"/>
    <property type="project" value="UniProtKB-EC"/>
</dbReference>
<dbReference type="Gene3D" id="1.25.40.20">
    <property type="entry name" value="Ankyrin repeat-containing domain"/>
    <property type="match status" value="2"/>
</dbReference>
<dbReference type="Gene3D" id="3.30.1600.10">
    <property type="entry name" value="SIR2/SIRT2 'Small Domain"/>
    <property type="match status" value="1"/>
</dbReference>
<dbReference type="Gene3D" id="3.40.50.1220">
    <property type="entry name" value="TPP-binding domain"/>
    <property type="match status" value="1"/>
</dbReference>
<dbReference type="InterPro" id="IPR002110">
    <property type="entry name" value="Ankyrin_rpt"/>
</dbReference>
<dbReference type="InterPro" id="IPR036770">
    <property type="entry name" value="Ankyrin_rpt-contain_sf"/>
</dbReference>
<dbReference type="InterPro" id="IPR029035">
    <property type="entry name" value="DHS-like_NAD/FAD-binding_dom"/>
</dbReference>
<dbReference type="InterPro" id="IPR050134">
    <property type="entry name" value="NAD-dep_sirtuin_deacylases"/>
</dbReference>
<dbReference type="InterPro" id="IPR003000">
    <property type="entry name" value="Sirtuin"/>
</dbReference>
<dbReference type="InterPro" id="IPR026591">
    <property type="entry name" value="Sirtuin_cat_small_dom_sf"/>
</dbReference>
<dbReference type="InterPro" id="IPR026590">
    <property type="entry name" value="Ssirtuin_cat_dom"/>
</dbReference>
<dbReference type="PANTHER" id="PTHR11085:SF8">
    <property type="entry name" value="NAD-DEPENDENT HISTONE DEACETYLASE HST3"/>
    <property type="match status" value="1"/>
</dbReference>
<dbReference type="PANTHER" id="PTHR11085">
    <property type="entry name" value="NAD-DEPENDENT PROTEIN DEACYLASE SIRTUIN-5, MITOCHONDRIAL-RELATED"/>
    <property type="match status" value="1"/>
</dbReference>
<dbReference type="Pfam" id="PF00023">
    <property type="entry name" value="Ank"/>
    <property type="match status" value="1"/>
</dbReference>
<dbReference type="Pfam" id="PF12796">
    <property type="entry name" value="Ank_2"/>
    <property type="match status" value="2"/>
</dbReference>
<dbReference type="Pfam" id="PF02146">
    <property type="entry name" value="SIR2"/>
    <property type="match status" value="1"/>
</dbReference>
<dbReference type="SMART" id="SM00248">
    <property type="entry name" value="ANK"/>
    <property type="match status" value="10"/>
</dbReference>
<dbReference type="SUPFAM" id="SSF48403">
    <property type="entry name" value="Ankyrin repeat"/>
    <property type="match status" value="1"/>
</dbReference>
<dbReference type="SUPFAM" id="SSF52467">
    <property type="entry name" value="DHS-like NAD/FAD-binding domain"/>
    <property type="match status" value="1"/>
</dbReference>
<dbReference type="PROSITE" id="PS50297">
    <property type="entry name" value="ANK_REP_REGION"/>
    <property type="match status" value="1"/>
</dbReference>
<dbReference type="PROSITE" id="PS50088">
    <property type="entry name" value="ANK_REPEAT"/>
    <property type="match status" value="1"/>
</dbReference>
<dbReference type="PROSITE" id="PS50305">
    <property type="entry name" value="SIRTUIN"/>
    <property type="match status" value="1"/>
</dbReference>
<sequence>MINILKDILYKSYSYLAFPFFYLGWAIKNSYQPNKTIKEEESKPPKYPKEWSDLFIHSYNNEHEKVLEIIQKEPNSINSVDSLNWTPLHVAVSNKSIEVVTLLLERNIEISIKRYTAFHIAACNGDLNIIEKMITMNRVPNGNILSNDMETSLFLSITNNHFEISEKIMDYYQSSMNSNEFKKMIDQFNVHGVSPLIMSVLRKNLKMIKKLIEEGDADINSFKKDNSTSLHCAAIIDFTEAIEYLLDIGGIELMNSINRYGNSPIHEAAIKGNFKSIQTFINQLKKIIIKNNCSDGDSDKDKLNLLLLEIIDKKDKDGSTPLHLCCNCVNSDNIENNLKSCKVLIEEGGVQVNGIDSGNATALHILACVGEDKSLPLVKYFLSIGSDPTIENKYGWTPIHQAYNNKNIQIYQLLLDHLKLTNSTYKLDIEKKRVFQSSSTSTSSSSSSSSSSSSSSSSSSLLLNKEELKLKGIERLKNVINGIKKGEFKNVIVLSGAGISANAGIPPYRTKDGLLAKNKQFSFSMEILEKHPDVFYQAIRDHFYPIIKASNDNDRDDGISAGIKSTKSHYFINDLNEKYGCLLRNYTQNVDPLQERTGTPTDKIIHAHGSFDQWYCTVCQKQYTDKSDRIWREIGRGGLPFCTEPECRHVIRPNVVFFGEPLSQDFRVNTITDFRKADLLIVMGTSLIVYPFASLVNDVASDVPRLLFNFESTGPFVNTMDLERKEKLKQQQENESGESSNDNDNNELIVEARGNRDIVILGDCDKGVDYFNTLFNSF</sequence>
<protein>
    <recommendedName>
        <fullName>NAD-dependent deacetylase sir2B</fullName>
        <ecNumber evidence="2">2.3.1.286</ecNumber>
    </recommendedName>
    <alternativeName>
        <fullName>Silent information regulator sir2B</fullName>
    </alternativeName>
</protein>
<name>SIR2B_DICDI</name>
<proteinExistence type="evidence at transcript level"/>
<feature type="chain" id="PRO_0000393126" description="NAD-dependent deacetylase sir2B">
    <location>
        <begin position="1"/>
        <end position="778"/>
    </location>
</feature>
<feature type="repeat" description="ANK 1">
    <location>
        <begin position="83"/>
        <end position="112"/>
    </location>
</feature>
<feature type="repeat" description="ANK 2">
    <location>
        <begin position="114"/>
        <end position="142"/>
    </location>
</feature>
<feature type="repeat" description="ANK 3">
    <location>
        <begin position="148"/>
        <end position="178"/>
    </location>
</feature>
<feature type="repeat" description="ANK 4">
    <location>
        <begin position="191"/>
        <end position="221"/>
    </location>
</feature>
<feature type="repeat" description="ANK 5">
    <location>
        <begin position="225"/>
        <end position="255"/>
    </location>
</feature>
<feature type="repeat" description="ANK 6">
    <location>
        <begin position="260"/>
        <end position="289"/>
    </location>
</feature>
<feature type="repeat" description="ANK 7">
    <location>
        <begin position="317"/>
        <end position="354"/>
    </location>
</feature>
<feature type="repeat" description="ANK 8">
    <location>
        <begin position="358"/>
        <end position="390"/>
    </location>
</feature>
<feature type="repeat" description="ANK 9">
    <location>
        <begin position="394"/>
        <end position="423"/>
    </location>
</feature>
<feature type="domain" description="Deacetylase sirtuin-type" evidence="2">
    <location>
        <begin position="465"/>
        <end position="778"/>
    </location>
</feature>
<feature type="region of interest" description="Disordered" evidence="3">
    <location>
        <begin position="438"/>
        <end position="458"/>
    </location>
</feature>
<feature type="region of interest" description="Disordered" evidence="3">
    <location>
        <begin position="727"/>
        <end position="746"/>
    </location>
</feature>
<feature type="compositionally biased region" description="Low complexity" evidence="3">
    <location>
        <begin position="733"/>
        <end position="746"/>
    </location>
</feature>
<feature type="active site" description="Proton acceptor" evidence="2">
    <location>
        <position position="608"/>
    </location>
</feature>
<feature type="binding site" evidence="2">
    <location>
        <position position="616"/>
    </location>
    <ligand>
        <name>Zn(2+)</name>
        <dbReference type="ChEBI" id="CHEBI:29105"/>
    </ligand>
</feature>
<feature type="binding site" evidence="2">
    <location>
        <position position="619"/>
    </location>
    <ligand>
        <name>Zn(2+)</name>
        <dbReference type="ChEBI" id="CHEBI:29105"/>
    </ligand>
</feature>
<feature type="binding site" evidence="2">
    <location>
        <position position="642"/>
    </location>
    <ligand>
        <name>Zn(2+)</name>
        <dbReference type="ChEBI" id="CHEBI:29105"/>
    </ligand>
</feature>
<feature type="binding site" evidence="2">
    <location>
        <position position="647"/>
    </location>
    <ligand>
        <name>Zn(2+)</name>
        <dbReference type="ChEBI" id="CHEBI:29105"/>
    </ligand>
</feature>